<sequence>MARVKRGVTSHAKHKKVLKAAKGYYGRRKNTIRIAKQAVEKGLQYAYRDRKNRKRNFRSLWIQRLNAAAREHGLTYSRLIDGLAKAGIVVDRKALSELAIHEPAAFAAVVEQARAALPAETAQAA</sequence>
<dbReference type="EMBL" id="CP000943">
    <property type="protein sequence ID" value="ACA19638.1"/>
    <property type="molecule type" value="Genomic_DNA"/>
</dbReference>
<dbReference type="RefSeq" id="WP_012335023.1">
    <property type="nucleotide sequence ID" value="NC_010511.1"/>
</dbReference>
<dbReference type="SMR" id="B0UPJ6"/>
<dbReference type="STRING" id="426117.M446_5320"/>
<dbReference type="KEGG" id="met:M446_5320"/>
<dbReference type="eggNOG" id="COG0292">
    <property type="taxonomic scope" value="Bacteria"/>
</dbReference>
<dbReference type="HOGENOM" id="CLU_123265_0_1_5"/>
<dbReference type="GO" id="GO:1990904">
    <property type="term" value="C:ribonucleoprotein complex"/>
    <property type="evidence" value="ECO:0007669"/>
    <property type="project" value="UniProtKB-KW"/>
</dbReference>
<dbReference type="GO" id="GO:0005840">
    <property type="term" value="C:ribosome"/>
    <property type="evidence" value="ECO:0007669"/>
    <property type="project" value="UniProtKB-KW"/>
</dbReference>
<dbReference type="GO" id="GO:0019843">
    <property type="term" value="F:rRNA binding"/>
    <property type="evidence" value="ECO:0007669"/>
    <property type="project" value="UniProtKB-UniRule"/>
</dbReference>
<dbReference type="GO" id="GO:0003735">
    <property type="term" value="F:structural constituent of ribosome"/>
    <property type="evidence" value="ECO:0007669"/>
    <property type="project" value="InterPro"/>
</dbReference>
<dbReference type="GO" id="GO:0000027">
    <property type="term" value="P:ribosomal large subunit assembly"/>
    <property type="evidence" value="ECO:0007669"/>
    <property type="project" value="UniProtKB-UniRule"/>
</dbReference>
<dbReference type="GO" id="GO:0006412">
    <property type="term" value="P:translation"/>
    <property type="evidence" value="ECO:0007669"/>
    <property type="project" value="InterPro"/>
</dbReference>
<dbReference type="CDD" id="cd07026">
    <property type="entry name" value="Ribosomal_L20"/>
    <property type="match status" value="1"/>
</dbReference>
<dbReference type="FunFam" id="1.10.1900.20:FF:000001">
    <property type="entry name" value="50S ribosomal protein L20"/>
    <property type="match status" value="1"/>
</dbReference>
<dbReference type="Gene3D" id="6.10.160.10">
    <property type="match status" value="1"/>
</dbReference>
<dbReference type="Gene3D" id="1.10.1900.20">
    <property type="entry name" value="Ribosomal protein L20"/>
    <property type="match status" value="1"/>
</dbReference>
<dbReference type="HAMAP" id="MF_00382">
    <property type="entry name" value="Ribosomal_bL20"/>
    <property type="match status" value="1"/>
</dbReference>
<dbReference type="InterPro" id="IPR005813">
    <property type="entry name" value="Ribosomal_bL20"/>
</dbReference>
<dbReference type="InterPro" id="IPR049946">
    <property type="entry name" value="RIBOSOMAL_L20_CS"/>
</dbReference>
<dbReference type="InterPro" id="IPR035566">
    <property type="entry name" value="Ribosomal_protein_bL20_C"/>
</dbReference>
<dbReference type="NCBIfam" id="TIGR01032">
    <property type="entry name" value="rplT_bact"/>
    <property type="match status" value="1"/>
</dbReference>
<dbReference type="PANTHER" id="PTHR10986">
    <property type="entry name" value="39S RIBOSOMAL PROTEIN L20"/>
    <property type="match status" value="1"/>
</dbReference>
<dbReference type="Pfam" id="PF00453">
    <property type="entry name" value="Ribosomal_L20"/>
    <property type="match status" value="1"/>
</dbReference>
<dbReference type="PRINTS" id="PR00062">
    <property type="entry name" value="RIBOSOMALL20"/>
</dbReference>
<dbReference type="SUPFAM" id="SSF74731">
    <property type="entry name" value="Ribosomal protein L20"/>
    <property type="match status" value="1"/>
</dbReference>
<dbReference type="PROSITE" id="PS00937">
    <property type="entry name" value="RIBOSOMAL_L20"/>
    <property type="match status" value="1"/>
</dbReference>
<gene>
    <name evidence="1" type="primary">rplT</name>
    <name type="ordered locus">M446_5320</name>
</gene>
<accession>B0UPJ6</accession>
<feature type="chain" id="PRO_1000122339" description="Large ribosomal subunit protein bL20">
    <location>
        <begin position="1"/>
        <end position="125"/>
    </location>
</feature>
<proteinExistence type="inferred from homology"/>
<protein>
    <recommendedName>
        <fullName evidence="1">Large ribosomal subunit protein bL20</fullName>
    </recommendedName>
    <alternativeName>
        <fullName evidence="2">50S ribosomal protein L20</fullName>
    </alternativeName>
</protein>
<organism>
    <name type="scientific">Methylobacterium sp. (strain 4-46)</name>
    <dbReference type="NCBI Taxonomy" id="426117"/>
    <lineage>
        <taxon>Bacteria</taxon>
        <taxon>Pseudomonadati</taxon>
        <taxon>Pseudomonadota</taxon>
        <taxon>Alphaproteobacteria</taxon>
        <taxon>Hyphomicrobiales</taxon>
        <taxon>Methylobacteriaceae</taxon>
        <taxon>Methylobacterium</taxon>
    </lineage>
</organism>
<name>RL20_METS4</name>
<keyword id="KW-0687">Ribonucleoprotein</keyword>
<keyword id="KW-0689">Ribosomal protein</keyword>
<keyword id="KW-0694">RNA-binding</keyword>
<keyword id="KW-0699">rRNA-binding</keyword>
<reference key="1">
    <citation type="submission" date="2008-02" db="EMBL/GenBank/DDBJ databases">
        <title>Complete sequence of chromosome of Methylobacterium sp. 4-46.</title>
        <authorList>
            <consortium name="US DOE Joint Genome Institute"/>
            <person name="Copeland A."/>
            <person name="Lucas S."/>
            <person name="Lapidus A."/>
            <person name="Glavina del Rio T."/>
            <person name="Dalin E."/>
            <person name="Tice H."/>
            <person name="Bruce D."/>
            <person name="Goodwin L."/>
            <person name="Pitluck S."/>
            <person name="Chertkov O."/>
            <person name="Brettin T."/>
            <person name="Detter J.C."/>
            <person name="Han C."/>
            <person name="Kuske C.R."/>
            <person name="Schmutz J."/>
            <person name="Larimer F."/>
            <person name="Land M."/>
            <person name="Hauser L."/>
            <person name="Kyrpides N."/>
            <person name="Ivanova N."/>
            <person name="Marx C.J."/>
            <person name="Richardson P."/>
        </authorList>
    </citation>
    <scope>NUCLEOTIDE SEQUENCE [LARGE SCALE GENOMIC DNA]</scope>
    <source>
        <strain>4-46</strain>
    </source>
</reference>
<comment type="function">
    <text evidence="1">Binds directly to 23S ribosomal RNA and is necessary for the in vitro assembly process of the 50S ribosomal subunit. It is not involved in the protein synthesizing functions of that subunit.</text>
</comment>
<comment type="similarity">
    <text evidence="1">Belongs to the bacterial ribosomal protein bL20 family.</text>
</comment>
<evidence type="ECO:0000255" key="1">
    <source>
        <dbReference type="HAMAP-Rule" id="MF_00382"/>
    </source>
</evidence>
<evidence type="ECO:0000305" key="2"/>